<keyword id="KW-1167">Clathrin- and caveolin-independent endocytosis of virus by host</keyword>
<keyword id="KW-1165">Clathrin-mediated endocytosis of virus by host</keyword>
<keyword id="KW-1015">Disulfide bond</keyword>
<keyword id="KW-1170">Fusion of virus membrane with host endosomal membrane</keyword>
<keyword id="KW-1168">Fusion of virus membrane with host membrane</keyword>
<keyword id="KW-0325">Glycoprotein</keyword>
<keyword id="KW-0348">Hemagglutinin</keyword>
<keyword id="KW-1032">Host cell membrane</keyword>
<keyword id="KW-1043">Host membrane</keyword>
<keyword id="KW-0945">Host-virus interaction</keyword>
<keyword id="KW-0449">Lipoprotein</keyword>
<keyword id="KW-0472">Membrane</keyword>
<keyword id="KW-0564">Palmitate</keyword>
<keyword id="KW-0732">Signal</keyword>
<keyword id="KW-0812">Transmembrane</keyword>
<keyword id="KW-1133">Transmembrane helix</keyword>
<keyword id="KW-1161">Viral attachment to host cell</keyword>
<keyword id="KW-0261">Viral envelope protein</keyword>
<keyword id="KW-1162">Viral penetration into host cytoplasm</keyword>
<keyword id="KW-0946">Virion</keyword>
<keyword id="KW-1164">Virus endocytosis by host</keyword>
<keyword id="KW-1160">Virus entry into host cell</keyword>
<organism>
    <name type="scientific">Influenza A virus (strain A/Grey teal/Australia/2/1979 H4N4)</name>
    <dbReference type="NCBI Taxonomy" id="402464"/>
    <lineage>
        <taxon>Viruses</taxon>
        <taxon>Riboviria</taxon>
        <taxon>Orthornavirae</taxon>
        <taxon>Negarnaviricota</taxon>
        <taxon>Polyploviricotina</taxon>
        <taxon>Insthoviricetes</taxon>
        <taxon>Articulavirales</taxon>
        <taxon>Orthomyxoviridae</taxon>
        <taxon>Alphainfluenzavirus</taxon>
        <taxon>Alphainfluenzavirus influenzae</taxon>
        <taxon>Influenza A virus</taxon>
    </lineage>
</organism>
<evidence type="ECO:0000255" key="1">
    <source>
        <dbReference type="HAMAP-Rule" id="MF_04072"/>
    </source>
</evidence>
<evidence type="ECO:0000305" key="2"/>
<comment type="function">
    <text>Binds to sialic acid-containing receptors on the cell surface, bringing about the attachment of the virus particle to the cell. This attachment induces virion internalization of about two third of the virus particles through clathrin-dependent endocytosis and about one third through a clathrin- and caveolin-independent pathway. Plays a major role in the determination of host range restriction and virulence. Class I viral fusion protein. Responsible for penetration of the virus into the cell cytoplasm by mediating the fusion of the membrane of the endocytosed virus particle with the endosomal membrane. Low pH in endosomes induces an irreversible conformational change in HA2, releasing the fusion hydrophobic peptide. Several trimers are required to form a competent fusion pore.</text>
</comment>
<comment type="function">
    <text evidence="1">Binds to sialic acid-containing receptors on the cell surface, bringing about the attachment of the virus particle to the cell. This attachment induces virion internalization either through clathrin-dependent endocytosis or through clathrin- and caveolin-independent pathway. Plays a major role in the determination of host range restriction and virulence. Class I viral fusion protein. Responsible for penetration of the virus into the cell cytoplasm by mediating the fusion of the membrane of the endocytosed virus particle with the endosomal membrane. Low pH in endosomes induces an irreversible conformational change in HA2, releasing the fusion hydrophobic peptide. Several trimers are required to form a competent fusion pore.</text>
</comment>
<comment type="subunit">
    <text evidence="1">Homotrimer of disulfide-linked HA1-HA2.</text>
</comment>
<comment type="subcellular location">
    <subcellularLocation>
        <location evidence="1">Virion membrane</location>
        <topology evidence="1">Single-pass type I membrane protein</topology>
    </subcellularLocation>
    <subcellularLocation>
        <location evidence="1">Host apical cell membrane</location>
        <topology evidence="1">Single-pass type I membrane protein</topology>
    </subcellularLocation>
    <text evidence="1">Targeted to the apical plasma membrane in epithelial polarized cells through a signal present in the transmembrane domain. Associated with glycosphingolipid- and cholesterol-enriched detergent-resistant lipid rafts.</text>
</comment>
<comment type="PTM">
    <text evidence="1">Palmitoylated.</text>
</comment>
<comment type="PTM">
    <text evidence="1">In natural infection, inactive HA is matured into HA1 and HA2 outside the cell by one or more trypsin-like, arginine-specific endoprotease secreted by the bronchial epithelial cells. One identified protease that may be involved in this process is secreted in lungs by club cells.</text>
</comment>
<comment type="miscellaneous">
    <text>Major glycoprotein, comprises over 80% of the envelope proteins present in virus particle.</text>
</comment>
<comment type="miscellaneous">
    <text>The extent of infection into host organism is determined by HA. Influenza viruses bud from the apical surface of polarized epithelial cells (e.g. bronchial epithelial cells) into lumen of lungs and are therefore usually pneumotropic. The reason is that HA is cleaved by tryptase clara which is restricted to lungs. However, HAs of H5 and H7 pantropic avian viruses subtypes can be cleaved by furin and subtilisin-type enzymes, allowing the virus to grow in other organs than lungs.</text>
</comment>
<comment type="miscellaneous">
    <text evidence="2">The influenza A genome consist of 8 RNA segments. Genetic variation of hemagglutinin and/or neuraminidase genes results in the emergence of new influenza strains. The mechanism of variation can be the result of point mutations or the result of genetic reassortment between segments of two different strains.</text>
</comment>
<comment type="similarity">
    <text evidence="1">Belongs to the influenza viruses hemagglutinin family.</text>
</comment>
<comment type="caution">
    <text evidence="2">PubMed:2705304 sequence differs from that shown due to a possible error of identification. The sequence is closer to A/Duck/Czeckoslovakia/56 that to sequenced Australian strains.</text>
</comment>
<dbReference type="EMBL" id="M25284">
    <property type="protein sequence ID" value="AAA43217.1"/>
    <property type="molecule type" value="Genomic_RNA"/>
</dbReference>
<dbReference type="EMBL" id="CY005672">
    <property type="protein sequence ID" value="ABB20362.1"/>
    <property type="molecule type" value="Genomic_RNA"/>
</dbReference>
<dbReference type="SMR" id="P19698"/>
<dbReference type="GlyCosmos" id="P19698">
    <property type="glycosylation" value="5 sites, No reported glycans"/>
</dbReference>
<dbReference type="PRO" id="PR:P19698"/>
<dbReference type="Proteomes" id="UP000008575">
    <property type="component" value="Genome"/>
</dbReference>
<dbReference type="GO" id="GO:0020002">
    <property type="term" value="C:host cell plasma membrane"/>
    <property type="evidence" value="ECO:0007669"/>
    <property type="project" value="UniProtKB-SubCell"/>
</dbReference>
<dbReference type="GO" id="GO:0016020">
    <property type="term" value="C:membrane"/>
    <property type="evidence" value="ECO:0007669"/>
    <property type="project" value="UniProtKB-UniRule"/>
</dbReference>
<dbReference type="GO" id="GO:0019031">
    <property type="term" value="C:viral envelope"/>
    <property type="evidence" value="ECO:0007669"/>
    <property type="project" value="UniProtKB-UniRule"/>
</dbReference>
<dbReference type="GO" id="GO:0055036">
    <property type="term" value="C:virion membrane"/>
    <property type="evidence" value="ECO:0007669"/>
    <property type="project" value="UniProtKB-SubCell"/>
</dbReference>
<dbReference type="GO" id="GO:0046789">
    <property type="term" value="F:host cell surface receptor binding"/>
    <property type="evidence" value="ECO:0007669"/>
    <property type="project" value="UniProtKB-UniRule"/>
</dbReference>
<dbReference type="GO" id="GO:0075512">
    <property type="term" value="P:clathrin-dependent endocytosis of virus by host cell"/>
    <property type="evidence" value="ECO:0007669"/>
    <property type="project" value="UniProtKB-UniRule"/>
</dbReference>
<dbReference type="GO" id="GO:0039654">
    <property type="term" value="P:fusion of virus membrane with host endosome membrane"/>
    <property type="evidence" value="ECO:0007669"/>
    <property type="project" value="UniProtKB-UniRule"/>
</dbReference>
<dbReference type="GO" id="GO:0019064">
    <property type="term" value="P:fusion of virus membrane with host plasma membrane"/>
    <property type="evidence" value="ECO:0007669"/>
    <property type="project" value="InterPro"/>
</dbReference>
<dbReference type="GO" id="GO:0046761">
    <property type="term" value="P:viral budding from plasma membrane"/>
    <property type="evidence" value="ECO:0007669"/>
    <property type="project" value="UniProtKB-UniRule"/>
</dbReference>
<dbReference type="GO" id="GO:0019062">
    <property type="term" value="P:virion attachment to host cell"/>
    <property type="evidence" value="ECO:0007669"/>
    <property type="project" value="UniProtKB-KW"/>
</dbReference>
<dbReference type="Gene3D" id="3.90.20.10">
    <property type="match status" value="1"/>
</dbReference>
<dbReference type="Gene3D" id="3.90.209.20">
    <property type="match status" value="1"/>
</dbReference>
<dbReference type="HAMAP" id="MF_04072">
    <property type="entry name" value="INFV_HEMA"/>
    <property type="match status" value="1"/>
</dbReference>
<dbReference type="InterPro" id="IPR008980">
    <property type="entry name" value="Capsid_hemagglutn"/>
</dbReference>
<dbReference type="InterPro" id="IPR013828">
    <property type="entry name" value="Hemagglutn_HA1_a/b_dom_sf"/>
</dbReference>
<dbReference type="InterPro" id="IPR000149">
    <property type="entry name" value="Hemagglutn_influenz_A"/>
</dbReference>
<dbReference type="InterPro" id="IPR001364">
    <property type="entry name" value="Hemagglutn_influenz_A/B"/>
</dbReference>
<dbReference type="Pfam" id="PF00509">
    <property type="entry name" value="Hemagglutinin"/>
    <property type="match status" value="1"/>
</dbReference>
<dbReference type="PRINTS" id="PR00330">
    <property type="entry name" value="HEMAGGLUTN1"/>
</dbReference>
<dbReference type="PRINTS" id="PR00329">
    <property type="entry name" value="HEMAGGLUTN12"/>
</dbReference>
<dbReference type="SUPFAM" id="SSF58064">
    <property type="entry name" value="Influenza hemagglutinin (stalk)"/>
    <property type="match status" value="1"/>
</dbReference>
<dbReference type="SUPFAM" id="SSF49818">
    <property type="entry name" value="Viral protein domain"/>
    <property type="match status" value="1"/>
</dbReference>
<reference key="1">
    <citation type="journal article" date="1989" name="Virology">
        <title>Distinct lineages of influenza virus H4 hemagglutinin genes in different regions of the world.</title>
        <authorList>
            <person name="Donis R.O."/>
            <person name="Bean W.J."/>
            <person name="Kawaoka Y."/>
            <person name="Webster R.G."/>
        </authorList>
    </citation>
    <scope>NUCLEOTIDE SEQUENCE [GENOMIC RNA]</scope>
</reference>
<reference key="2">
    <citation type="journal article" date="2006" name="Science">
        <title>Large-scale sequence analysis of avian influenza isolates.</title>
        <authorList>
            <person name="Obenauer J.C."/>
            <person name="Denson J."/>
            <person name="Mehta P.K."/>
            <person name="Su X."/>
            <person name="Mukatira S."/>
            <person name="Finkelstein D.B."/>
            <person name="Xu X."/>
            <person name="Wang J."/>
            <person name="Ma J."/>
            <person name="Fan Y."/>
            <person name="Rakestraw K.M."/>
            <person name="Webster R.G."/>
            <person name="Hoffmann E."/>
            <person name="Krauss S."/>
            <person name="Zheng J."/>
            <person name="Zhang Z."/>
            <person name="Naeve C.W."/>
        </authorList>
    </citation>
    <scope>NUCLEOTIDE SEQUENCE [GENOMIC RNA]</scope>
</reference>
<feature type="signal peptide" evidence="1">
    <location>
        <begin position="1"/>
        <end position="16"/>
    </location>
</feature>
<feature type="chain" id="PRO_0000440480" description="Hemagglutinin" evidence="1">
    <location>
        <begin position="17"/>
        <end position="564"/>
    </location>
</feature>
<feature type="chain" id="PRO_0000038959" description="Hemagglutinin HA1 chain">
    <location>
        <begin position="17"/>
        <end position="342"/>
    </location>
</feature>
<feature type="chain" id="PRO_0000038960" description="Hemagglutinin HA2 chain" evidence="1">
    <location>
        <begin position="344"/>
        <end position="564"/>
    </location>
</feature>
<feature type="topological domain" description="Extracellular" evidence="1">
    <location>
        <begin position="17"/>
        <end position="527"/>
    </location>
</feature>
<feature type="transmembrane region" description="Helical" evidence="1">
    <location>
        <begin position="528"/>
        <end position="548"/>
    </location>
</feature>
<feature type="topological domain" description="Cytoplasmic" evidence="1">
    <location>
        <begin position="549"/>
        <end position="564"/>
    </location>
</feature>
<feature type="site" description="Cleavage; by host" evidence="1">
    <location>
        <begin position="343"/>
        <end position="344"/>
    </location>
</feature>
<feature type="lipid moiety-binding region" description="S-palmitoyl cysteine; by host" evidence="1">
    <location>
        <position position="553"/>
    </location>
</feature>
<feature type="lipid moiety-binding region" description="S-palmitoyl cysteine; by host" evidence="1">
    <location>
        <position position="560"/>
    </location>
</feature>
<feature type="lipid moiety-binding region" description="S-palmitoyl cysteine; by host" evidence="1">
    <location>
        <position position="563"/>
    </location>
</feature>
<feature type="glycosylation site" description="N-linked (GlcNAc...) asparagine; by host" evidence="1">
    <location>
        <position position="18"/>
    </location>
</feature>
<feature type="glycosylation site" description="N-linked (GlcNAc...) asparagine; by host" evidence="1">
    <location>
        <position position="34"/>
    </location>
</feature>
<feature type="glycosylation site" description="N-linked (GlcNAc...) asparagine; by host" evidence="1">
    <location>
        <position position="178"/>
    </location>
</feature>
<feature type="glycosylation site" description="N-linked (GlcNAc...) asparagine; by host" evidence="1">
    <location>
        <position position="310"/>
    </location>
</feature>
<feature type="glycosylation site" description="N-linked (GlcNAc...) asparagine; by host" evidence="1">
    <location>
        <position position="497"/>
    </location>
</feature>
<feature type="disulfide bond" description="Interchain (between HA1 and HA2 chains)" evidence="1">
    <location>
        <begin position="26"/>
        <end position="480"/>
    </location>
</feature>
<feature type="disulfide bond" evidence="1">
    <location>
        <begin position="64"/>
        <end position="291"/>
    </location>
</feature>
<feature type="disulfide bond" evidence="1">
    <location>
        <begin position="76"/>
        <end position="88"/>
    </location>
</feature>
<feature type="disulfide bond" evidence="1">
    <location>
        <begin position="109"/>
        <end position="151"/>
    </location>
</feature>
<feature type="disulfide bond" evidence="1">
    <location>
        <begin position="295"/>
        <end position="319"/>
    </location>
</feature>
<feature type="disulfide bond" evidence="1">
    <location>
        <begin position="487"/>
        <end position="491"/>
    </location>
</feature>
<feature type="sequence conflict" description="In Ref. 1; AAA43217." evidence="2" ref="1">
    <original>VLL</original>
    <variation>ILF</variation>
    <location>
        <begin position="6"/>
        <end position="8"/>
    </location>
</feature>
<feature type="sequence conflict" description="In Ref. 1; AAA43217." evidence="2" ref="1">
    <original>S</original>
    <variation>N</variation>
    <location>
        <position position="14"/>
    </location>
</feature>
<feature type="sequence conflict" description="In Ref. 1; AAA43217." evidence="2" ref="1">
    <original>T</original>
    <variation>A</variation>
    <location>
        <position position="42"/>
    </location>
</feature>
<feature type="sequence conflict" description="In Ref. 1; AAA43217." evidence="2" ref="1">
    <original>I</original>
    <variation>N</variation>
    <location>
        <position position="59"/>
    </location>
</feature>
<feature type="sequence conflict" description="In Ref. 1; AAA43217." evidence="2" ref="1">
    <original>V</original>
    <variation>I</variation>
    <location>
        <position position="79"/>
    </location>
</feature>
<feature type="sequence conflict" description="In Ref. 1; AAA43217." evidence="2" ref="1">
    <original>S</original>
    <variation>N</variation>
    <location>
        <position position="104"/>
    </location>
</feature>
<feature type="sequence conflict" description="In Ref. 1; AAA43217." evidence="2" ref="1">
    <original>D</original>
    <variation>E</variation>
    <location>
        <position position="116"/>
    </location>
</feature>
<feature type="sequence conflict" description="In Ref. 1; AAA43217." evidence="2" ref="1">
    <original>G</original>
    <variation>S</variation>
    <location>
        <position position="231"/>
    </location>
</feature>
<feature type="sequence conflict" description="In Ref. 1; AAA43217." evidence="2" ref="1">
    <original>IS</original>
    <variation>DC</variation>
    <location>
        <begin position="243"/>
        <end position="244"/>
    </location>
</feature>
<feature type="sequence conflict" description="In Ref. 1; AAA43217." evidence="2" ref="1">
    <original>P</original>
    <variation>S</variation>
    <location>
        <position position="267"/>
    </location>
</feature>
<feature type="sequence conflict" description="In Ref. 1; AAA43217." evidence="2" ref="1">
    <original>LDS</original>
    <variation>VNN</variation>
    <location>
        <begin position="273"/>
        <end position="275"/>
    </location>
</feature>
<feature type="sequence conflict" description="In Ref. 1; AAA43217." evidence="2" ref="1">
    <original>V</original>
    <variation>I</variation>
    <location>
        <position position="286"/>
    </location>
</feature>
<feature type="sequence conflict" description="In Ref. 1; AAA43217." evidence="2" ref="1">
    <original>I</original>
    <variation>V</variation>
    <location>
        <position position="316"/>
    </location>
</feature>
<feature type="sequence conflict" description="In Ref. 1; AAA43217." evidence="2" ref="1">
    <original>K</original>
    <variation>R</variation>
    <location>
        <position position="321"/>
    </location>
</feature>
<feature type="sequence conflict" description="In Ref. 1; AAA43217." evidence="2" ref="1">
    <original>E</original>
    <variation>D</variation>
    <location>
        <position position="404"/>
    </location>
</feature>
<feature type="sequence conflict" description="In Ref. 1; AAA43217." evidence="2" ref="1">
    <original>E</original>
    <variation>K</variation>
    <location>
        <position position="424"/>
    </location>
</feature>
<name>HEMA_I79A7</name>
<gene>
    <name evidence="1" type="primary">HA</name>
</gene>
<proteinExistence type="inferred from homology"/>
<protein>
    <recommendedName>
        <fullName evidence="1">Hemagglutinin</fullName>
    </recommendedName>
    <component>
        <recommendedName>
            <fullName evidence="1">Hemagglutinin HA1 chain</fullName>
        </recommendedName>
    </component>
    <component>
        <recommendedName>
            <fullName evidence="1">Hemagglutinin HA2 chain</fullName>
        </recommendedName>
    </component>
</protein>
<sequence length="564" mass="63073">MLSIVVLLLLIAESSSQNYTGNPVICMGHHAVANGTMVKTLTDDQVEVVTAQELVESQILPELCPSPLRLVDGQTCDIVNGALGSPGCDHLNGAEWDVFIERPSAVDTCYPFDVPDYQSLRSILANNGKFEFIAEEFQWNTVKQNGKSGACKRANVNDFFNRLNWLVKSDGNAYPLQNLTKINNGDYARLYIWGVHHPSTDTEQTNLYKNNPGRVTVSTKTSQTSVVPNIGSRPLVRGQSGRISFYWTIVEPGDLIVFNTIGNLIAPRGHYKLDSQKKSTILNTAVPIGSCVSKCHTDKGSLSTTKPFQNISRIAIGDCPKYVKQGSLKLATGMRNIPEKASRGLFGAIAGFIENGWQGLIDGWYGFRHQNAEGTGTAADLKSTQAAIDQINGKLNRLIEKTNEKYHQIEKEFEQVEGRIQDLEKYVEDTKIDLWSYNAELLVALENQHTIDVTDSEMNKLFERVRRQLRENAEDKGNGCFEIFHKCDNNCIESIRNGTYDHDIYRDEAINNRFQIQGVKLTQGYKDIILWISFSISCFLLVALLLAFILWACQNGNIRCQICI</sequence>
<organismHost>
    <name type="scientific">Aves</name>
    <dbReference type="NCBI Taxonomy" id="8782"/>
</organismHost>
<accession>P19698</accession>
<accession>Q20PM3</accession>